<keyword id="KW-0175">Coiled coil</keyword>
<keyword id="KW-1185">Reference proteome</keyword>
<organism>
    <name type="scientific">Archaeoglobus fulgidus (strain ATCC 49558 / DSM 4304 / JCM 9628 / NBRC 100126 / VC-16)</name>
    <dbReference type="NCBI Taxonomy" id="224325"/>
    <lineage>
        <taxon>Archaea</taxon>
        <taxon>Methanobacteriati</taxon>
        <taxon>Methanobacteriota</taxon>
        <taxon>Archaeoglobi</taxon>
        <taxon>Archaeoglobales</taxon>
        <taxon>Archaeoglobaceae</taxon>
        <taxon>Archaeoglobus</taxon>
    </lineage>
</organism>
<gene>
    <name type="ordered locus">AF_1047</name>
</gene>
<evidence type="ECO:0000255" key="1"/>
<evidence type="ECO:0000256" key="2">
    <source>
        <dbReference type="SAM" id="MobiDB-lite"/>
    </source>
</evidence>
<dbReference type="EMBL" id="AE000782">
    <property type="protein sequence ID" value="AAB90195.1"/>
    <property type="molecule type" value="Genomic_DNA"/>
</dbReference>
<dbReference type="PIR" id="G69380">
    <property type="entry name" value="G69380"/>
</dbReference>
<dbReference type="RefSeq" id="WP_010878547.1">
    <property type="nucleotide sequence ID" value="NC_000917.1"/>
</dbReference>
<dbReference type="SMR" id="O29215"/>
<dbReference type="STRING" id="224325.AF_1047"/>
<dbReference type="PaxDb" id="224325-AF_1047"/>
<dbReference type="DNASU" id="1484270"/>
<dbReference type="EnsemblBacteria" id="AAB90195">
    <property type="protein sequence ID" value="AAB90195"/>
    <property type="gene ID" value="AF_1047"/>
</dbReference>
<dbReference type="KEGG" id="afu:AF_1047"/>
<dbReference type="eggNOG" id="arCOG06517">
    <property type="taxonomic scope" value="Archaea"/>
</dbReference>
<dbReference type="HOGENOM" id="CLU_1291983_0_0_2"/>
<dbReference type="OrthoDB" id="387544at2157"/>
<dbReference type="Proteomes" id="UP000002199">
    <property type="component" value="Chromosome"/>
</dbReference>
<feature type="chain" id="PRO_0000127954" description="Uncharacterized protein AF_1047">
    <location>
        <begin position="1"/>
        <end position="214"/>
    </location>
</feature>
<feature type="region of interest" description="Disordered" evidence="2">
    <location>
        <begin position="99"/>
        <end position="162"/>
    </location>
</feature>
<feature type="coiled-coil region" evidence="1">
    <location>
        <begin position="39"/>
        <end position="68"/>
    </location>
</feature>
<feature type="coiled-coil region" evidence="1">
    <location>
        <begin position="138"/>
        <end position="212"/>
    </location>
</feature>
<feature type="compositionally biased region" description="Basic and acidic residues" evidence="2">
    <location>
        <begin position="99"/>
        <end position="114"/>
    </location>
</feature>
<feature type="compositionally biased region" description="Acidic residues" evidence="2">
    <location>
        <begin position="123"/>
        <end position="162"/>
    </location>
</feature>
<proteinExistence type="predicted"/>
<reference key="1">
    <citation type="journal article" date="1997" name="Nature">
        <title>The complete genome sequence of the hyperthermophilic, sulphate-reducing archaeon Archaeoglobus fulgidus.</title>
        <authorList>
            <person name="Klenk H.-P."/>
            <person name="Clayton R.A."/>
            <person name="Tomb J.-F."/>
            <person name="White O."/>
            <person name="Nelson K.E."/>
            <person name="Ketchum K.A."/>
            <person name="Dodson R.J."/>
            <person name="Gwinn M.L."/>
            <person name="Hickey E.K."/>
            <person name="Peterson J.D."/>
            <person name="Richardson D.L."/>
            <person name="Kerlavage A.R."/>
            <person name="Graham D.E."/>
            <person name="Kyrpides N.C."/>
            <person name="Fleischmann R.D."/>
            <person name="Quackenbush J."/>
            <person name="Lee N.H."/>
            <person name="Sutton G.G."/>
            <person name="Gill S.R."/>
            <person name="Kirkness E.F."/>
            <person name="Dougherty B.A."/>
            <person name="McKenney K."/>
            <person name="Adams M.D."/>
            <person name="Loftus B.J."/>
            <person name="Peterson S.N."/>
            <person name="Reich C.I."/>
            <person name="McNeil L.K."/>
            <person name="Badger J.H."/>
            <person name="Glodek A."/>
            <person name="Zhou L."/>
            <person name="Overbeek R."/>
            <person name="Gocayne J.D."/>
            <person name="Weidman J.F."/>
            <person name="McDonald L.A."/>
            <person name="Utterback T.R."/>
            <person name="Cotton M.D."/>
            <person name="Spriggs T."/>
            <person name="Artiach P."/>
            <person name="Kaine B.P."/>
            <person name="Sykes S.M."/>
            <person name="Sadow P.W."/>
            <person name="D'Andrea K.P."/>
            <person name="Bowman C."/>
            <person name="Fujii C."/>
            <person name="Garland S.A."/>
            <person name="Mason T.M."/>
            <person name="Olsen G.J."/>
            <person name="Fraser C.M."/>
            <person name="Smith H.O."/>
            <person name="Woese C.R."/>
            <person name="Venter J.C."/>
        </authorList>
    </citation>
    <scope>NUCLEOTIDE SEQUENCE [LARGE SCALE GENOMIC DNA]</scope>
    <source>
        <strain>ATCC 49558 / DSM 4304 / JCM 9628 / NBRC 100126 / VC-16</strain>
    </source>
</reference>
<protein>
    <recommendedName>
        <fullName>Uncharacterized protein AF_1047</fullName>
    </recommendedName>
</protein>
<name>Y1047_ARCFU</name>
<accession>O29215</accession>
<sequence>MIEMLIGIAFAGFILAIPYVYERVGGKLSLGKLSLGMPKLRSKKEVEEKIKEVDRELEEVVNAGVSINPKPAEEKVVPLDDANVEPDDNLLEEMETASEIKVEAPEPDEEKLPDIPDLPELNSDLDMDFEDLGQEIPLDADEQEEEEEEEEVEEVEFDEEDDLISSLAKEVETKEEEEIDLLRDLKGQKFSAEELEAELQEMIQRLKVLSGGSS</sequence>